<feature type="chain" id="PRO_0000165780" description="Probable cytosol aminopeptidase">
    <location>
        <begin position="1"/>
        <end position="490"/>
    </location>
</feature>
<feature type="active site" evidence="1">
    <location>
        <position position="268"/>
    </location>
</feature>
<feature type="active site" evidence="1">
    <location>
        <position position="344"/>
    </location>
</feature>
<feature type="binding site" evidence="1">
    <location>
        <position position="256"/>
    </location>
    <ligand>
        <name>Mn(2+)</name>
        <dbReference type="ChEBI" id="CHEBI:29035"/>
        <label>2</label>
    </ligand>
</feature>
<feature type="binding site" evidence="1">
    <location>
        <position position="261"/>
    </location>
    <ligand>
        <name>Mn(2+)</name>
        <dbReference type="ChEBI" id="CHEBI:29035"/>
        <label>1</label>
    </ligand>
</feature>
<feature type="binding site" evidence="1">
    <location>
        <position position="261"/>
    </location>
    <ligand>
        <name>Mn(2+)</name>
        <dbReference type="ChEBI" id="CHEBI:29035"/>
        <label>2</label>
    </ligand>
</feature>
<feature type="binding site" evidence="1">
    <location>
        <position position="280"/>
    </location>
    <ligand>
        <name>Mn(2+)</name>
        <dbReference type="ChEBI" id="CHEBI:29035"/>
        <label>2</label>
    </ligand>
</feature>
<feature type="binding site" evidence="1">
    <location>
        <position position="340"/>
    </location>
    <ligand>
        <name>Mn(2+)</name>
        <dbReference type="ChEBI" id="CHEBI:29035"/>
        <label>1</label>
    </ligand>
</feature>
<feature type="binding site" evidence="1">
    <location>
        <position position="342"/>
    </location>
    <ligand>
        <name>Mn(2+)</name>
        <dbReference type="ChEBI" id="CHEBI:29035"/>
        <label>1</label>
    </ligand>
</feature>
<feature type="binding site" evidence="1">
    <location>
        <position position="342"/>
    </location>
    <ligand>
        <name>Mn(2+)</name>
        <dbReference type="ChEBI" id="CHEBI:29035"/>
        <label>2</label>
    </ligand>
</feature>
<name>AMPA_PROMM</name>
<sequence length="490" mass="51728">MEICLFPATLQSWTGDVLMVGMFEGKMEERLNELETLCKGSLMQSLEKQMFKGKSGEIATVQLLQNKPNLLVLVGLGEPQEMRLDDLRKAAALGAKASLGCSGTLGMMLPWEPLDAASAARAVAEAVRLSLYKDLRFRSAPEPRSTPTKLELIGLPDSAGKDLQAVHPTCAGVELARQLVAAPANSLTPAALAQTAIQLAHEHGLECSVLERSDCAEREMGAYLAVSQGSDLEPKFIHLTYRPQGPVQRRLALVGKGLTFDSGGYNLKVGAAQIDLMKFDMGGSAAVLGAARAIAELRPKGVEVHVIVAACENMVNGSAVHPGDLVRASNGTTIEINNTDAEGRLTLADALVYTCGLEPDAIVDLATLTGACVIALGEEIAGLWTGHDPLAEGLTAAAEAAGEGLWRMPLPSSYREGLKSNLADLKNTGPRPGGSITAALFLKEFVEASIPWAHIDIAGTVWSEKGRGLNPSGATGYGVRTLVNWICSQS</sequence>
<keyword id="KW-0031">Aminopeptidase</keyword>
<keyword id="KW-0963">Cytoplasm</keyword>
<keyword id="KW-0378">Hydrolase</keyword>
<keyword id="KW-0464">Manganese</keyword>
<keyword id="KW-0479">Metal-binding</keyword>
<keyword id="KW-0645">Protease</keyword>
<keyword id="KW-1185">Reference proteome</keyword>
<reference key="1">
    <citation type="journal article" date="2003" name="Nature">
        <title>Genome divergence in two Prochlorococcus ecotypes reflects oceanic niche differentiation.</title>
        <authorList>
            <person name="Rocap G."/>
            <person name="Larimer F.W."/>
            <person name="Lamerdin J.E."/>
            <person name="Malfatti S."/>
            <person name="Chain P."/>
            <person name="Ahlgren N.A."/>
            <person name="Arellano A."/>
            <person name="Coleman M."/>
            <person name="Hauser L."/>
            <person name="Hess W.R."/>
            <person name="Johnson Z.I."/>
            <person name="Land M.L."/>
            <person name="Lindell D."/>
            <person name="Post A.F."/>
            <person name="Regala W."/>
            <person name="Shah M."/>
            <person name="Shaw S.L."/>
            <person name="Steglich C."/>
            <person name="Sullivan M.B."/>
            <person name="Ting C.S."/>
            <person name="Tolonen A."/>
            <person name="Webb E.A."/>
            <person name="Zinser E.R."/>
            <person name="Chisholm S.W."/>
        </authorList>
    </citation>
    <scope>NUCLEOTIDE SEQUENCE [LARGE SCALE GENOMIC DNA]</scope>
    <source>
        <strain>MIT 9313</strain>
    </source>
</reference>
<accession>Q7V5X8</accession>
<dbReference type="EC" id="3.4.11.1" evidence="1"/>
<dbReference type="EC" id="3.4.11.10" evidence="1"/>
<dbReference type="EMBL" id="BX548175">
    <property type="protein sequence ID" value="CAE21582.1"/>
    <property type="molecule type" value="Genomic_DNA"/>
</dbReference>
<dbReference type="RefSeq" id="WP_011130775.1">
    <property type="nucleotide sequence ID" value="NC_005071.1"/>
</dbReference>
<dbReference type="SMR" id="Q7V5X8"/>
<dbReference type="KEGG" id="pmt:PMT_1407"/>
<dbReference type="eggNOG" id="COG0260">
    <property type="taxonomic scope" value="Bacteria"/>
</dbReference>
<dbReference type="HOGENOM" id="CLU_013734_5_1_3"/>
<dbReference type="OrthoDB" id="9809354at2"/>
<dbReference type="Proteomes" id="UP000001423">
    <property type="component" value="Chromosome"/>
</dbReference>
<dbReference type="GO" id="GO:0005737">
    <property type="term" value="C:cytoplasm"/>
    <property type="evidence" value="ECO:0007669"/>
    <property type="project" value="UniProtKB-SubCell"/>
</dbReference>
<dbReference type="GO" id="GO:0030145">
    <property type="term" value="F:manganese ion binding"/>
    <property type="evidence" value="ECO:0007669"/>
    <property type="project" value="UniProtKB-UniRule"/>
</dbReference>
<dbReference type="GO" id="GO:0070006">
    <property type="term" value="F:metalloaminopeptidase activity"/>
    <property type="evidence" value="ECO:0007669"/>
    <property type="project" value="InterPro"/>
</dbReference>
<dbReference type="GO" id="GO:0006508">
    <property type="term" value="P:proteolysis"/>
    <property type="evidence" value="ECO:0007669"/>
    <property type="project" value="UniProtKB-KW"/>
</dbReference>
<dbReference type="CDD" id="cd00433">
    <property type="entry name" value="Peptidase_M17"/>
    <property type="match status" value="1"/>
</dbReference>
<dbReference type="Gene3D" id="3.40.220.10">
    <property type="entry name" value="Leucine Aminopeptidase, subunit E, domain 1"/>
    <property type="match status" value="1"/>
</dbReference>
<dbReference type="Gene3D" id="3.40.630.10">
    <property type="entry name" value="Zn peptidases"/>
    <property type="match status" value="1"/>
</dbReference>
<dbReference type="HAMAP" id="MF_00181">
    <property type="entry name" value="Cytosol_peptidase_M17"/>
    <property type="match status" value="1"/>
</dbReference>
<dbReference type="InterPro" id="IPR011356">
    <property type="entry name" value="Leucine_aapep/pepB"/>
</dbReference>
<dbReference type="InterPro" id="IPR043472">
    <property type="entry name" value="Macro_dom-like"/>
</dbReference>
<dbReference type="InterPro" id="IPR000819">
    <property type="entry name" value="Peptidase_M17_C"/>
</dbReference>
<dbReference type="InterPro" id="IPR023042">
    <property type="entry name" value="Peptidase_M17_leu_NH2_pept"/>
</dbReference>
<dbReference type="InterPro" id="IPR008283">
    <property type="entry name" value="Peptidase_M17_N"/>
</dbReference>
<dbReference type="NCBIfam" id="NF002073">
    <property type="entry name" value="PRK00913.1-2"/>
    <property type="match status" value="1"/>
</dbReference>
<dbReference type="NCBIfam" id="NF002076">
    <property type="entry name" value="PRK00913.2-3"/>
    <property type="match status" value="1"/>
</dbReference>
<dbReference type="PANTHER" id="PTHR11963:SF23">
    <property type="entry name" value="CYTOSOL AMINOPEPTIDASE"/>
    <property type="match status" value="1"/>
</dbReference>
<dbReference type="PANTHER" id="PTHR11963">
    <property type="entry name" value="LEUCINE AMINOPEPTIDASE-RELATED"/>
    <property type="match status" value="1"/>
</dbReference>
<dbReference type="Pfam" id="PF00883">
    <property type="entry name" value="Peptidase_M17"/>
    <property type="match status" value="1"/>
</dbReference>
<dbReference type="Pfam" id="PF02789">
    <property type="entry name" value="Peptidase_M17_N"/>
    <property type="match status" value="1"/>
</dbReference>
<dbReference type="PRINTS" id="PR00481">
    <property type="entry name" value="LAMNOPPTDASE"/>
</dbReference>
<dbReference type="SUPFAM" id="SSF52949">
    <property type="entry name" value="Macro domain-like"/>
    <property type="match status" value="1"/>
</dbReference>
<dbReference type="SUPFAM" id="SSF53187">
    <property type="entry name" value="Zn-dependent exopeptidases"/>
    <property type="match status" value="1"/>
</dbReference>
<dbReference type="PROSITE" id="PS00631">
    <property type="entry name" value="CYTOSOL_AP"/>
    <property type="match status" value="1"/>
</dbReference>
<protein>
    <recommendedName>
        <fullName evidence="1">Probable cytosol aminopeptidase</fullName>
        <ecNumber evidence="1">3.4.11.1</ecNumber>
    </recommendedName>
    <alternativeName>
        <fullName evidence="1">Leucine aminopeptidase</fullName>
        <shortName evidence="1">LAP</shortName>
        <ecNumber evidence="1">3.4.11.10</ecNumber>
    </alternativeName>
    <alternativeName>
        <fullName evidence="1">Leucyl aminopeptidase</fullName>
    </alternativeName>
</protein>
<organism>
    <name type="scientific">Prochlorococcus marinus (strain MIT 9313)</name>
    <dbReference type="NCBI Taxonomy" id="74547"/>
    <lineage>
        <taxon>Bacteria</taxon>
        <taxon>Bacillati</taxon>
        <taxon>Cyanobacteriota</taxon>
        <taxon>Cyanophyceae</taxon>
        <taxon>Synechococcales</taxon>
        <taxon>Prochlorococcaceae</taxon>
        <taxon>Prochlorococcus</taxon>
    </lineage>
</organism>
<proteinExistence type="inferred from homology"/>
<comment type="function">
    <text evidence="1">Presumably involved in the processing and regular turnover of intracellular proteins. Catalyzes the removal of unsubstituted N-terminal amino acids from various peptides.</text>
</comment>
<comment type="catalytic activity">
    <reaction evidence="1">
        <text>Release of an N-terminal amino acid, Xaa-|-Yaa-, in which Xaa is preferably Leu, but may be other amino acids including Pro although not Arg or Lys, and Yaa may be Pro. Amino acid amides and methyl esters are also readily hydrolyzed, but rates on arylamides are exceedingly low.</text>
        <dbReference type="EC" id="3.4.11.1"/>
    </reaction>
</comment>
<comment type="catalytic activity">
    <reaction evidence="1">
        <text>Release of an N-terminal amino acid, preferentially leucine, but not glutamic or aspartic acids.</text>
        <dbReference type="EC" id="3.4.11.10"/>
    </reaction>
</comment>
<comment type="cofactor">
    <cofactor evidence="1">
        <name>Mn(2+)</name>
        <dbReference type="ChEBI" id="CHEBI:29035"/>
    </cofactor>
    <text evidence="1">Binds 2 manganese ions per subunit.</text>
</comment>
<comment type="subcellular location">
    <subcellularLocation>
        <location evidence="1">Cytoplasm</location>
    </subcellularLocation>
</comment>
<comment type="similarity">
    <text evidence="1">Belongs to the peptidase M17 family.</text>
</comment>
<evidence type="ECO:0000255" key="1">
    <source>
        <dbReference type="HAMAP-Rule" id="MF_00181"/>
    </source>
</evidence>
<gene>
    <name evidence="1" type="primary">pepA</name>
    <name type="ordered locus">PMT_1407</name>
</gene>